<proteinExistence type="inferred from homology"/>
<keyword id="KW-1185">Reference proteome</keyword>
<keyword id="KW-0687">Ribonucleoprotein</keyword>
<keyword id="KW-0689">Ribosomal protein</keyword>
<keyword id="KW-0694">RNA-binding</keyword>
<keyword id="KW-0699">rRNA-binding</keyword>
<keyword id="KW-0820">tRNA-binding</keyword>
<organism>
    <name type="scientific">Brucella canis (strain ATCC 23365 / NCTC 10854 / RM-666)</name>
    <dbReference type="NCBI Taxonomy" id="483179"/>
    <lineage>
        <taxon>Bacteria</taxon>
        <taxon>Pseudomonadati</taxon>
        <taxon>Pseudomonadota</taxon>
        <taxon>Alphaproteobacteria</taxon>
        <taxon>Hyphomicrobiales</taxon>
        <taxon>Brucellaceae</taxon>
        <taxon>Brucella/Ochrobactrum group</taxon>
        <taxon>Brucella</taxon>
    </lineage>
</organism>
<evidence type="ECO:0000255" key="1">
    <source>
        <dbReference type="HAMAP-Rule" id="MF_01315"/>
    </source>
</evidence>
<evidence type="ECO:0000256" key="2">
    <source>
        <dbReference type="SAM" id="MobiDB-lite"/>
    </source>
</evidence>
<evidence type="ECO:0000305" key="3"/>
<gene>
    <name evidence="1" type="primary">rpsM</name>
    <name type="ordered locus">BCAN_A1233</name>
</gene>
<dbReference type="EMBL" id="CP000872">
    <property type="protein sequence ID" value="ABX62282.1"/>
    <property type="molecule type" value="Genomic_DNA"/>
</dbReference>
<dbReference type="RefSeq" id="WP_002964340.1">
    <property type="nucleotide sequence ID" value="NC_010103.1"/>
</dbReference>
<dbReference type="SMR" id="A9M5M7"/>
<dbReference type="GeneID" id="97533546"/>
<dbReference type="KEGG" id="bcs:BCAN_A1233"/>
<dbReference type="HOGENOM" id="CLU_103849_1_2_5"/>
<dbReference type="PhylomeDB" id="A9M5M7"/>
<dbReference type="Proteomes" id="UP000001385">
    <property type="component" value="Chromosome I"/>
</dbReference>
<dbReference type="GO" id="GO:0005829">
    <property type="term" value="C:cytosol"/>
    <property type="evidence" value="ECO:0007669"/>
    <property type="project" value="TreeGrafter"/>
</dbReference>
<dbReference type="GO" id="GO:0015935">
    <property type="term" value="C:small ribosomal subunit"/>
    <property type="evidence" value="ECO:0007669"/>
    <property type="project" value="TreeGrafter"/>
</dbReference>
<dbReference type="GO" id="GO:0019843">
    <property type="term" value="F:rRNA binding"/>
    <property type="evidence" value="ECO:0007669"/>
    <property type="project" value="UniProtKB-UniRule"/>
</dbReference>
<dbReference type="GO" id="GO:0003735">
    <property type="term" value="F:structural constituent of ribosome"/>
    <property type="evidence" value="ECO:0007669"/>
    <property type="project" value="InterPro"/>
</dbReference>
<dbReference type="GO" id="GO:0000049">
    <property type="term" value="F:tRNA binding"/>
    <property type="evidence" value="ECO:0007669"/>
    <property type="project" value="UniProtKB-UniRule"/>
</dbReference>
<dbReference type="GO" id="GO:0006412">
    <property type="term" value="P:translation"/>
    <property type="evidence" value="ECO:0007669"/>
    <property type="project" value="UniProtKB-UniRule"/>
</dbReference>
<dbReference type="FunFam" id="1.10.8.50:FF:000001">
    <property type="entry name" value="30S ribosomal protein S13"/>
    <property type="match status" value="1"/>
</dbReference>
<dbReference type="FunFam" id="4.10.910.10:FF:000001">
    <property type="entry name" value="30S ribosomal protein S13"/>
    <property type="match status" value="1"/>
</dbReference>
<dbReference type="Gene3D" id="1.10.8.50">
    <property type="match status" value="1"/>
</dbReference>
<dbReference type="Gene3D" id="4.10.910.10">
    <property type="entry name" value="30s ribosomal protein s13, domain 2"/>
    <property type="match status" value="1"/>
</dbReference>
<dbReference type="HAMAP" id="MF_01315">
    <property type="entry name" value="Ribosomal_uS13"/>
    <property type="match status" value="1"/>
</dbReference>
<dbReference type="InterPro" id="IPR027437">
    <property type="entry name" value="Rbsml_uS13_C"/>
</dbReference>
<dbReference type="InterPro" id="IPR001892">
    <property type="entry name" value="Ribosomal_uS13"/>
</dbReference>
<dbReference type="InterPro" id="IPR010979">
    <property type="entry name" value="Ribosomal_uS13-like_H2TH"/>
</dbReference>
<dbReference type="InterPro" id="IPR019980">
    <property type="entry name" value="Ribosomal_uS13_bac-type"/>
</dbReference>
<dbReference type="InterPro" id="IPR018269">
    <property type="entry name" value="Ribosomal_uS13_CS"/>
</dbReference>
<dbReference type="NCBIfam" id="TIGR03631">
    <property type="entry name" value="uS13_bact"/>
    <property type="match status" value="1"/>
</dbReference>
<dbReference type="PANTHER" id="PTHR10871">
    <property type="entry name" value="30S RIBOSOMAL PROTEIN S13/40S RIBOSOMAL PROTEIN S18"/>
    <property type="match status" value="1"/>
</dbReference>
<dbReference type="PANTHER" id="PTHR10871:SF1">
    <property type="entry name" value="SMALL RIBOSOMAL SUBUNIT PROTEIN US13M"/>
    <property type="match status" value="1"/>
</dbReference>
<dbReference type="Pfam" id="PF00416">
    <property type="entry name" value="Ribosomal_S13"/>
    <property type="match status" value="1"/>
</dbReference>
<dbReference type="PIRSF" id="PIRSF002134">
    <property type="entry name" value="Ribosomal_S13"/>
    <property type="match status" value="1"/>
</dbReference>
<dbReference type="SUPFAM" id="SSF46946">
    <property type="entry name" value="S13-like H2TH domain"/>
    <property type="match status" value="1"/>
</dbReference>
<dbReference type="PROSITE" id="PS00646">
    <property type="entry name" value="RIBOSOMAL_S13_1"/>
    <property type="match status" value="1"/>
</dbReference>
<dbReference type="PROSITE" id="PS50159">
    <property type="entry name" value="RIBOSOMAL_S13_2"/>
    <property type="match status" value="1"/>
</dbReference>
<accession>A9M5M7</accession>
<protein>
    <recommendedName>
        <fullName evidence="1">Small ribosomal subunit protein uS13</fullName>
    </recommendedName>
    <alternativeName>
        <fullName evidence="3">30S ribosomal protein S13</fullName>
    </alternativeName>
</protein>
<comment type="function">
    <text evidence="1">Located at the top of the head of the 30S subunit, it contacts several helices of the 16S rRNA. In the 70S ribosome it contacts the 23S rRNA (bridge B1a) and protein L5 of the 50S subunit (bridge B1b), connecting the 2 subunits; these bridges are implicated in subunit movement. Contacts the tRNAs in the A and P-sites.</text>
</comment>
<comment type="subunit">
    <text evidence="1">Part of the 30S ribosomal subunit. Forms a loose heterodimer with protein S19. Forms two bridges to the 50S subunit in the 70S ribosome.</text>
</comment>
<comment type="similarity">
    <text evidence="1">Belongs to the universal ribosomal protein uS13 family.</text>
</comment>
<sequence length="122" mass="13769">MARIAGVNIPTNKRVNIALQYIHGIGPKFAREIVTKVGIADDRRVNQLSDAEVLQIREAIDADYQVEGDLRREVSMNIKRLMDLGCYRGLRHRRSLPVRGQRTHTNARTRKGPAKAIAGKKK</sequence>
<name>RS13_BRUC2</name>
<reference key="1">
    <citation type="submission" date="2007-10" db="EMBL/GenBank/DDBJ databases">
        <title>Brucella canis ATCC 23365 whole genome shotgun sequencing project.</title>
        <authorList>
            <person name="Setubal J.C."/>
            <person name="Bowns C."/>
            <person name="Boyle S."/>
            <person name="Crasta O.R."/>
            <person name="Czar M.J."/>
            <person name="Dharmanolla C."/>
            <person name="Gillespie J.J."/>
            <person name="Kenyon R.W."/>
            <person name="Lu J."/>
            <person name="Mane S."/>
            <person name="Mohapatra S."/>
            <person name="Nagrani S."/>
            <person name="Purkayastha A."/>
            <person name="Rajasimha H.K."/>
            <person name="Shallom J.M."/>
            <person name="Shallom S."/>
            <person name="Shukla M."/>
            <person name="Snyder E.E."/>
            <person name="Sobral B.W."/>
            <person name="Wattam A.R."/>
            <person name="Will R."/>
            <person name="Williams K."/>
            <person name="Yoo H."/>
            <person name="Bruce D."/>
            <person name="Detter C."/>
            <person name="Munk C."/>
            <person name="Brettin T.S."/>
        </authorList>
    </citation>
    <scope>NUCLEOTIDE SEQUENCE [LARGE SCALE GENOMIC DNA]</scope>
    <source>
        <strain>ATCC 23365 / NCTC 10854 / RM-666</strain>
    </source>
</reference>
<feature type="chain" id="PRO_1000086229" description="Small ribosomal subunit protein uS13">
    <location>
        <begin position="1"/>
        <end position="122"/>
    </location>
</feature>
<feature type="region of interest" description="Disordered" evidence="2">
    <location>
        <begin position="97"/>
        <end position="122"/>
    </location>
</feature>